<organism>
    <name type="scientific">Ruegeria pomeroyi (strain ATCC 700808 / DSM 15171 / DSS-3)</name>
    <name type="common">Silicibacter pomeroyi</name>
    <dbReference type="NCBI Taxonomy" id="246200"/>
    <lineage>
        <taxon>Bacteria</taxon>
        <taxon>Pseudomonadati</taxon>
        <taxon>Pseudomonadota</taxon>
        <taxon>Alphaproteobacteria</taxon>
        <taxon>Rhodobacterales</taxon>
        <taxon>Roseobacteraceae</taxon>
        <taxon>Ruegeria</taxon>
    </lineage>
</organism>
<dbReference type="EC" id="3.5.2.3" evidence="1"/>
<dbReference type="EMBL" id="CP000031">
    <property type="protein sequence ID" value="AAV95898.1"/>
    <property type="molecule type" value="Genomic_DNA"/>
</dbReference>
<dbReference type="RefSeq" id="WP_011048355.1">
    <property type="nucleotide sequence ID" value="NC_003911.12"/>
</dbReference>
<dbReference type="SMR" id="Q5LQ43"/>
<dbReference type="STRING" id="246200.SPO2653"/>
<dbReference type="MEROPS" id="M38.A02"/>
<dbReference type="PaxDb" id="246200-SPO2653"/>
<dbReference type="KEGG" id="sil:SPO2653"/>
<dbReference type="eggNOG" id="COG0418">
    <property type="taxonomic scope" value="Bacteria"/>
</dbReference>
<dbReference type="HOGENOM" id="CLU_041558_1_0_5"/>
<dbReference type="OrthoDB" id="9808095at2"/>
<dbReference type="UniPathway" id="UPA00070">
    <property type="reaction ID" value="UER00117"/>
</dbReference>
<dbReference type="Proteomes" id="UP000001023">
    <property type="component" value="Chromosome"/>
</dbReference>
<dbReference type="GO" id="GO:0005829">
    <property type="term" value="C:cytosol"/>
    <property type="evidence" value="ECO:0007669"/>
    <property type="project" value="TreeGrafter"/>
</dbReference>
<dbReference type="GO" id="GO:0004151">
    <property type="term" value="F:dihydroorotase activity"/>
    <property type="evidence" value="ECO:0007669"/>
    <property type="project" value="UniProtKB-UniRule"/>
</dbReference>
<dbReference type="GO" id="GO:0008270">
    <property type="term" value="F:zinc ion binding"/>
    <property type="evidence" value="ECO:0007669"/>
    <property type="project" value="UniProtKB-UniRule"/>
</dbReference>
<dbReference type="GO" id="GO:0006207">
    <property type="term" value="P:'de novo' pyrimidine nucleobase biosynthetic process"/>
    <property type="evidence" value="ECO:0007669"/>
    <property type="project" value="TreeGrafter"/>
</dbReference>
<dbReference type="GO" id="GO:0044205">
    <property type="term" value="P:'de novo' UMP biosynthetic process"/>
    <property type="evidence" value="ECO:0007669"/>
    <property type="project" value="UniProtKB-UniRule"/>
</dbReference>
<dbReference type="CDD" id="cd01294">
    <property type="entry name" value="DHOase"/>
    <property type="match status" value="1"/>
</dbReference>
<dbReference type="Gene3D" id="3.20.20.140">
    <property type="entry name" value="Metal-dependent hydrolases"/>
    <property type="match status" value="1"/>
</dbReference>
<dbReference type="HAMAP" id="MF_00219">
    <property type="entry name" value="PyrC_classII"/>
    <property type="match status" value="1"/>
</dbReference>
<dbReference type="InterPro" id="IPR006680">
    <property type="entry name" value="Amidohydro-rel"/>
</dbReference>
<dbReference type="InterPro" id="IPR004721">
    <property type="entry name" value="DHOdimr"/>
</dbReference>
<dbReference type="InterPro" id="IPR002195">
    <property type="entry name" value="Dihydroorotase_CS"/>
</dbReference>
<dbReference type="InterPro" id="IPR032466">
    <property type="entry name" value="Metal_Hydrolase"/>
</dbReference>
<dbReference type="NCBIfam" id="TIGR00856">
    <property type="entry name" value="pyrC_dimer"/>
    <property type="match status" value="1"/>
</dbReference>
<dbReference type="PANTHER" id="PTHR43137">
    <property type="entry name" value="DIHYDROOROTASE"/>
    <property type="match status" value="1"/>
</dbReference>
<dbReference type="PANTHER" id="PTHR43137:SF1">
    <property type="entry name" value="DIHYDROOROTASE"/>
    <property type="match status" value="1"/>
</dbReference>
<dbReference type="Pfam" id="PF01979">
    <property type="entry name" value="Amidohydro_1"/>
    <property type="match status" value="1"/>
</dbReference>
<dbReference type="PIRSF" id="PIRSF001237">
    <property type="entry name" value="DHOdimr"/>
    <property type="match status" value="1"/>
</dbReference>
<dbReference type="SUPFAM" id="SSF51556">
    <property type="entry name" value="Metallo-dependent hydrolases"/>
    <property type="match status" value="1"/>
</dbReference>
<dbReference type="PROSITE" id="PS00482">
    <property type="entry name" value="DIHYDROOROTASE_1"/>
    <property type="match status" value="1"/>
</dbReference>
<dbReference type="PROSITE" id="PS00483">
    <property type="entry name" value="DIHYDROOROTASE_2"/>
    <property type="match status" value="1"/>
</dbReference>
<accession>Q5LQ43</accession>
<keyword id="KW-0378">Hydrolase</keyword>
<keyword id="KW-0479">Metal-binding</keyword>
<keyword id="KW-0665">Pyrimidine biosynthesis</keyword>
<keyword id="KW-1185">Reference proteome</keyword>
<keyword id="KW-0862">Zinc</keyword>
<reference key="1">
    <citation type="journal article" date="2004" name="Nature">
        <title>Genome sequence of Silicibacter pomeroyi reveals adaptations to the marine environment.</title>
        <authorList>
            <person name="Moran M.A."/>
            <person name="Buchan A."/>
            <person name="Gonzalez J.M."/>
            <person name="Heidelberg J.F."/>
            <person name="Whitman W.B."/>
            <person name="Kiene R.P."/>
            <person name="Henriksen J.R."/>
            <person name="King G.M."/>
            <person name="Belas R."/>
            <person name="Fuqua C."/>
            <person name="Brinkac L.M."/>
            <person name="Lewis M."/>
            <person name="Johri S."/>
            <person name="Weaver B."/>
            <person name="Pai G."/>
            <person name="Eisen J.A."/>
            <person name="Rahe E."/>
            <person name="Sheldon W.M."/>
            <person name="Ye W."/>
            <person name="Miller T.R."/>
            <person name="Carlton J."/>
            <person name="Rasko D.A."/>
            <person name="Paulsen I.T."/>
            <person name="Ren Q."/>
            <person name="Daugherty S.C."/>
            <person name="DeBoy R.T."/>
            <person name="Dodson R.J."/>
            <person name="Durkin A.S."/>
            <person name="Madupu R."/>
            <person name="Nelson W.C."/>
            <person name="Sullivan S.A."/>
            <person name="Rosovitz M.J."/>
            <person name="Haft D.H."/>
            <person name="Selengut J."/>
            <person name="Ward N."/>
        </authorList>
    </citation>
    <scope>NUCLEOTIDE SEQUENCE [LARGE SCALE GENOMIC DNA]</scope>
    <source>
        <strain>ATCC 700808 / DSM 15171 / DSS-3</strain>
    </source>
</reference>
<reference key="2">
    <citation type="journal article" date="2014" name="Stand. Genomic Sci.">
        <title>An updated genome annotation for the model marine bacterium Ruegeria pomeroyi DSS-3.</title>
        <authorList>
            <person name="Rivers A.R."/>
            <person name="Smith C.B."/>
            <person name="Moran M.A."/>
        </authorList>
    </citation>
    <scope>GENOME REANNOTATION</scope>
    <source>
        <strain>ATCC 700808 / DSM 15171 / DSS-3</strain>
    </source>
</reference>
<name>PYRC_RUEPO</name>
<sequence>MTQSLTIRRPDDWHLHLRDGAMLAAVLPETARHFARAIVMPNLVPPVVTGAQAAAYRDRILATLPKGMNFEPLMTLYLTEQTDPDDLAAAHTSGLITSVKLYPAGATTNSASGVKDFDKVRPVLERMAEIGCPLCVHGEVTDREIDIFDREAVFIDRVLDPIRRATPGLRVIMEHITTKDGADYVAANPEGLGATITVQHLMFDRNDMLVGGMRPHYYCLPILKRRHHREALVAAATSGDARYFLGTDSAPHPTHAKEAECCAAGCFTAPIALSCLAHVFEEAGALDKLEGFTSLNGPAFYGLPVNADTITLSKADPLDIPKTLPAGEHTVTVFDPGVPLHWRVTR</sequence>
<proteinExistence type="inferred from homology"/>
<evidence type="ECO:0000255" key="1">
    <source>
        <dbReference type="HAMAP-Rule" id="MF_00219"/>
    </source>
</evidence>
<protein>
    <recommendedName>
        <fullName evidence="1">Dihydroorotase</fullName>
        <shortName evidence="1">DHOase</shortName>
        <ecNumber evidence="1">3.5.2.3</ecNumber>
    </recommendedName>
</protein>
<feature type="chain" id="PRO_1000024064" description="Dihydroorotase">
    <location>
        <begin position="1"/>
        <end position="346"/>
    </location>
</feature>
<feature type="active site" evidence="1">
    <location>
        <position position="248"/>
    </location>
</feature>
<feature type="binding site" evidence="1">
    <location>
        <position position="14"/>
    </location>
    <ligand>
        <name>Zn(2+)</name>
        <dbReference type="ChEBI" id="CHEBI:29105"/>
        <label>1</label>
    </ligand>
</feature>
<feature type="binding site" evidence="1">
    <location>
        <begin position="16"/>
        <end position="18"/>
    </location>
    <ligand>
        <name>substrate</name>
    </ligand>
</feature>
<feature type="binding site" evidence="1">
    <location>
        <position position="16"/>
    </location>
    <ligand>
        <name>Zn(2+)</name>
        <dbReference type="ChEBI" id="CHEBI:29105"/>
        <label>1</label>
    </ligand>
</feature>
<feature type="binding site" evidence="1">
    <location>
        <position position="42"/>
    </location>
    <ligand>
        <name>substrate</name>
    </ligand>
</feature>
<feature type="binding site" description="via carbamate group" evidence="1">
    <location>
        <position position="100"/>
    </location>
    <ligand>
        <name>Zn(2+)</name>
        <dbReference type="ChEBI" id="CHEBI:29105"/>
        <label>1</label>
    </ligand>
</feature>
<feature type="binding site" description="via carbamate group" evidence="1">
    <location>
        <position position="100"/>
    </location>
    <ligand>
        <name>Zn(2+)</name>
        <dbReference type="ChEBI" id="CHEBI:29105"/>
        <label>2</label>
    </ligand>
</feature>
<feature type="binding site" evidence="1">
    <location>
        <position position="137"/>
    </location>
    <ligand>
        <name>substrate</name>
    </ligand>
</feature>
<feature type="binding site" evidence="1">
    <location>
        <position position="137"/>
    </location>
    <ligand>
        <name>Zn(2+)</name>
        <dbReference type="ChEBI" id="CHEBI:29105"/>
        <label>2</label>
    </ligand>
</feature>
<feature type="binding site" evidence="1">
    <location>
        <position position="175"/>
    </location>
    <ligand>
        <name>Zn(2+)</name>
        <dbReference type="ChEBI" id="CHEBI:29105"/>
        <label>2</label>
    </ligand>
</feature>
<feature type="binding site" evidence="1">
    <location>
        <position position="220"/>
    </location>
    <ligand>
        <name>substrate</name>
    </ligand>
</feature>
<feature type="binding site" evidence="1">
    <location>
        <position position="248"/>
    </location>
    <ligand>
        <name>Zn(2+)</name>
        <dbReference type="ChEBI" id="CHEBI:29105"/>
        <label>1</label>
    </ligand>
</feature>
<feature type="binding site" evidence="1">
    <location>
        <position position="252"/>
    </location>
    <ligand>
        <name>substrate</name>
    </ligand>
</feature>
<feature type="binding site" evidence="1">
    <location>
        <position position="264"/>
    </location>
    <ligand>
        <name>substrate</name>
    </ligand>
</feature>
<feature type="modified residue" description="N6-carboxylysine" evidence="1">
    <location>
        <position position="100"/>
    </location>
</feature>
<gene>
    <name evidence="1" type="primary">pyrC</name>
    <name type="ordered locus">SPO2653</name>
</gene>
<comment type="function">
    <text evidence="1">Catalyzes the reversible cyclization of carbamoyl aspartate to dihydroorotate.</text>
</comment>
<comment type="catalytic activity">
    <reaction evidence="1">
        <text>(S)-dihydroorotate + H2O = N-carbamoyl-L-aspartate + H(+)</text>
        <dbReference type="Rhea" id="RHEA:24296"/>
        <dbReference type="ChEBI" id="CHEBI:15377"/>
        <dbReference type="ChEBI" id="CHEBI:15378"/>
        <dbReference type="ChEBI" id="CHEBI:30864"/>
        <dbReference type="ChEBI" id="CHEBI:32814"/>
        <dbReference type="EC" id="3.5.2.3"/>
    </reaction>
</comment>
<comment type="cofactor">
    <cofactor evidence="1">
        <name>Zn(2+)</name>
        <dbReference type="ChEBI" id="CHEBI:29105"/>
    </cofactor>
    <text evidence="1">Binds 2 Zn(2+) ions per subunit.</text>
</comment>
<comment type="pathway">
    <text evidence="1">Pyrimidine metabolism; UMP biosynthesis via de novo pathway; (S)-dihydroorotate from bicarbonate: step 3/3.</text>
</comment>
<comment type="subunit">
    <text evidence="1">Homodimer.</text>
</comment>
<comment type="similarity">
    <text evidence="1">Belongs to the metallo-dependent hydrolases superfamily. DHOase family. Class II DHOase subfamily.</text>
</comment>